<reference key="1">
    <citation type="journal article" date="2010" name="PLoS ONE">
        <title>The complete genome sequence of Haloferax volcanii DS2, a model archaeon.</title>
        <authorList>
            <person name="Hartman A.L."/>
            <person name="Norais C."/>
            <person name="Badger J.H."/>
            <person name="Delmas S."/>
            <person name="Haldenby S."/>
            <person name="Madupu R."/>
            <person name="Robinson J."/>
            <person name="Khouri H."/>
            <person name="Ren Q."/>
            <person name="Lowe T.M."/>
            <person name="Maupin-Furlow J."/>
            <person name="Pohlschroder M."/>
            <person name="Daniels C."/>
            <person name="Pfeiffer F."/>
            <person name="Allers T."/>
            <person name="Eisen J.A."/>
        </authorList>
    </citation>
    <scope>NUCLEOTIDE SEQUENCE [LARGE SCALE GENOMIC DNA]</scope>
    <source>
        <strain evidence="6">ATCC 29605 / DSM 3757 / JCM 8879 / NBRC 14742 / NCIMB 2012 / VKM B-1768 / DS2</strain>
    </source>
</reference>
<reference key="2">
    <citation type="journal article" date="2012" name="J. Biol. Chem.">
        <title>An archaeal immune system can detect multiple protospacer adjacent motifs (PAMs) to target invader DNA.</title>
        <authorList>
            <person name="Fischer S."/>
            <person name="Maier L.K."/>
            <person name="Stoll B."/>
            <person name="Brendel J."/>
            <person name="Fischer E."/>
            <person name="Pfeiffer F."/>
            <person name="Dyall-Smith M."/>
            <person name="Marchfelder A."/>
        </authorList>
    </citation>
    <scope>FUNCTION</scope>
    <scope>DISRUPTION PHENOTYPE</scope>
    <source>
        <strain>DS2 / DS70 / H26</strain>
    </source>
</reference>
<reference key="3">
    <citation type="journal article" date="2014" name="J. Biol. Chem.">
        <title>A complex of Cas proteins 5, 6, and 7 is required for the biogenesis and stability of clustered regularly interspaced short palindromic repeats (CRISPR)-derived RNAs (crRNAs) in Haloferax volcanii.</title>
        <authorList>
            <person name="Brendel J."/>
            <person name="Stoll B."/>
            <person name="Lange S.J."/>
            <person name="Sharma K."/>
            <person name="Lenz C."/>
            <person name="Stachler A.E."/>
            <person name="Maier L.K."/>
            <person name="Richter H."/>
            <person name="Nickel L."/>
            <person name="Schmitz R.A."/>
            <person name="Randau L."/>
            <person name="Allers T."/>
            <person name="Urlaub H."/>
            <person name="Backofen R."/>
            <person name="Marchfelder A."/>
        </authorList>
    </citation>
    <scope>FUNCTION</scope>
    <scope>SUBCELLULAR LOCATION</scope>
    <source>
        <strain>DS2 / DS70 / H119</strain>
    </source>
</reference>
<comment type="function">
    <text evidence="2 3">CRISPR (clustered regularly interspaced short palindromic repeat) is an adaptive immune system that provides protection against mobile genetic elements (viruses, transposable elements and conjugative plasmids). CRISPR clusters contain sequences complementary to antecedent mobile elements and target invading nucleic acids. CRISPR clusters are transcribed and processed into CRISPR RNA (crRNA). Plasmid targeted by CRISPR locus P1 transform wild-type cells very poorly (PubMed:22767603). This subunit might be involved in stabilizing crRNA (PubMed:24459147).</text>
</comment>
<comment type="subcellular location">
    <subcellularLocation>
        <location evidence="3">Cytoplasm</location>
    </subcellularLocation>
</comment>
<comment type="disruption phenotype">
    <text evidence="2">Loss of the 8 Cas genes in this locus (cas1, cas2, cas3, cas4, cas5, cas6, cas7 and cas8b) leads to loss of CRISPR interference against plasmid targeted by this CRISPR locus, i.e. plasmid is not destroyed by CRISPR. Disruption of this single gene also leads to loss of CRISPR interference.</text>
</comment>
<comment type="miscellaneous">
    <text evidence="4 5">There are 3 CRISPR RNA loci in this organism and a single cas gene locus. A CRISPR-Cas type I-B system.</text>
</comment>
<proteinExistence type="predicted"/>
<geneLocation type="plasmid">
    <name>pHV4</name>
</geneLocation>
<feature type="chain" id="PRO_0000432158" description="CRISPR-associated protein Cas8b">
    <location>
        <begin position="1"/>
        <end position="717"/>
    </location>
</feature>
<feature type="region of interest" description="Disordered" evidence="1">
    <location>
        <begin position="263"/>
        <end position="283"/>
    </location>
</feature>
<feature type="region of interest" description="Disordered" evidence="1">
    <location>
        <begin position="698"/>
        <end position="717"/>
    </location>
</feature>
<feature type="compositionally biased region" description="Acidic residues" evidence="1">
    <location>
        <begin position="701"/>
        <end position="717"/>
    </location>
</feature>
<protein>
    <recommendedName>
        <fullName evidence="5">CRISPR-associated protein Cas8b</fullName>
    </recommendedName>
</protein>
<gene>
    <name evidence="5" type="primary">cas8b</name>
    <name type="ordered locus">HVO_A0206</name>
</gene>
<keyword id="KW-0051">Antiviral defense</keyword>
<keyword id="KW-0963">Cytoplasm</keyword>
<keyword id="KW-0614">Plasmid</keyword>
<keyword id="KW-1185">Reference proteome</keyword>
<accession>D4GQN5</accession>
<organism>
    <name type="scientific">Haloferax volcanii (strain ATCC 29605 / DSM 3757 / JCM 8879 / NBRC 14742 / NCIMB 2012 / VKM B-1768 / DS2)</name>
    <name type="common">Halobacterium volcanii</name>
    <dbReference type="NCBI Taxonomy" id="309800"/>
    <lineage>
        <taxon>Archaea</taxon>
        <taxon>Methanobacteriati</taxon>
        <taxon>Methanobacteriota</taxon>
        <taxon>Stenosarchaea group</taxon>
        <taxon>Halobacteria</taxon>
        <taxon>Halobacteriales</taxon>
        <taxon>Haloferacaceae</taxon>
        <taxon>Haloferax</taxon>
    </lineage>
</organism>
<name>CAS8B_HALVD</name>
<sequence>MTGPDIDDFENALNAFWHGRPPASLEDVMALYGVLAVAESGGELYGTDSKLEPFVDDGRLVTIDIDLTGETPNVSDPKVDTLRVEDVSKLRYAHKSSGRGAKYSLTQIGSKNGNDAEGVASTILGRVRSWTTQDSVRSVTGEDGHPDGWIVEELAAVFEKGSDTLEALEEAIKALLPPDESLPTVITVRLRLDAGRLSHGEESGPRWFWPAELDVLEEAMKRYATANAADKNVESGDGISEGESVGLVTDRVERVVGTPDNPIGVFSVKHPDAQPGLRQDQSWRNYPVGADTAMLFSKGQDLVETCVLRRGGVETYALPYFAGELTPLKAQSLYGAIQSLDRESDYDDSGGSPLARVTYELRESDDETLQELAKTELRFYTITLPIGDDKNVIAEEPAAPVYWVSELADALAQTVHGPTLNPERGGFAPYDNWSLLELATEDFEESRKFGFYRIVGHQFTDSAFAYRGDDEDDDFRRVVDHRLIAGVPLDASMLFDEYLRRYHDESEGGDLPPHQIVAQQLVHLETLSRAGLLNGLDVPIEPPTMTTETETETDFDTTSLPAIREHRLESFLDRPLFEAPARRAAALAGVLVGQVSWHQESERNVGRPLDAQTKGDQLTKNSLENALTSALEKAKVYALDSEYRSDRDMLFPETVDRLLETTEDMPSAWPIEKRELQFCYVLGHAHGRRSMPVAFDLHEKEDEDDQDTEEPAESTTN</sequence>
<evidence type="ECO:0000256" key="1">
    <source>
        <dbReference type="SAM" id="MobiDB-lite"/>
    </source>
</evidence>
<evidence type="ECO:0000269" key="2">
    <source>
    </source>
</evidence>
<evidence type="ECO:0000269" key="3">
    <source>
    </source>
</evidence>
<evidence type="ECO:0000303" key="4">
    <source>
    </source>
</evidence>
<evidence type="ECO:0000303" key="5">
    <source>
    </source>
</evidence>
<evidence type="ECO:0000312" key="6">
    <source>
        <dbReference type="Proteomes" id="UP000008243"/>
    </source>
</evidence>
<dbReference type="EMBL" id="CP001955">
    <property type="protein sequence ID" value="ADE01723.1"/>
    <property type="molecule type" value="Genomic_DNA"/>
</dbReference>
<dbReference type="RefSeq" id="WP_013035033.1">
    <property type="nucleotide sequence ID" value="NC_013966.1"/>
</dbReference>
<dbReference type="PaxDb" id="309800-C498_09706"/>
<dbReference type="EnsemblBacteria" id="ADE01723">
    <property type="protein sequence ID" value="ADE01723"/>
    <property type="gene ID" value="HVO_A0206"/>
</dbReference>
<dbReference type="GeneID" id="8923271"/>
<dbReference type="KEGG" id="hvo:HVO_A0206"/>
<dbReference type="eggNOG" id="arCOG05124">
    <property type="taxonomic scope" value="Archaea"/>
</dbReference>
<dbReference type="HOGENOM" id="CLU_391622_0_0_2"/>
<dbReference type="Proteomes" id="UP000008243">
    <property type="component" value="Plasmid pHV4"/>
</dbReference>
<dbReference type="GO" id="GO:0005737">
    <property type="term" value="C:cytoplasm"/>
    <property type="evidence" value="ECO:0007669"/>
    <property type="project" value="UniProtKB-SubCell"/>
</dbReference>
<dbReference type="GO" id="GO:0051607">
    <property type="term" value="P:defense response to virus"/>
    <property type="evidence" value="ECO:0007669"/>
    <property type="project" value="UniProtKB-KW"/>
</dbReference>
<dbReference type="InterPro" id="IPR013389">
    <property type="entry name" value="CRISPR-assoc_prot_Cas8b"/>
</dbReference>
<dbReference type="InterPro" id="IPR013420">
    <property type="entry name" value="CRISPR-assoc_prot_Cas8b/Csh1_C"/>
</dbReference>
<dbReference type="NCBIfam" id="TIGR02591">
    <property type="entry name" value="cas_Csh1"/>
    <property type="match status" value="1"/>
</dbReference>
<dbReference type="Pfam" id="PF09484">
    <property type="entry name" value="Cas_TM1802"/>
    <property type="match status" value="1"/>
</dbReference>